<dbReference type="EMBL" id="CP000352">
    <property type="protein sequence ID" value="ABF10162.1"/>
    <property type="molecule type" value="Genomic_DNA"/>
</dbReference>
<dbReference type="RefSeq" id="WP_008642987.1">
    <property type="nucleotide sequence ID" value="NC_007973.1"/>
</dbReference>
<dbReference type="SMR" id="Q1LI64"/>
<dbReference type="STRING" id="266264.Rmet_3290"/>
<dbReference type="GeneID" id="60826627"/>
<dbReference type="KEGG" id="rme:Rmet_3290"/>
<dbReference type="eggNOG" id="COG0203">
    <property type="taxonomic scope" value="Bacteria"/>
</dbReference>
<dbReference type="HOGENOM" id="CLU_074407_2_0_4"/>
<dbReference type="Proteomes" id="UP000002429">
    <property type="component" value="Chromosome"/>
</dbReference>
<dbReference type="GO" id="GO:0022625">
    <property type="term" value="C:cytosolic large ribosomal subunit"/>
    <property type="evidence" value="ECO:0007669"/>
    <property type="project" value="TreeGrafter"/>
</dbReference>
<dbReference type="GO" id="GO:0003735">
    <property type="term" value="F:structural constituent of ribosome"/>
    <property type="evidence" value="ECO:0007669"/>
    <property type="project" value="InterPro"/>
</dbReference>
<dbReference type="GO" id="GO:0006412">
    <property type="term" value="P:translation"/>
    <property type="evidence" value="ECO:0007669"/>
    <property type="project" value="UniProtKB-UniRule"/>
</dbReference>
<dbReference type="FunFam" id="3.90.1030.10:FF:000001">
    <property type="entry name" value="50S ribosomal protein L17"/>
    <property type="match status" value="1"/>
</dbReference>
<dbReference type="Gene3D" id="3.90.1030.10">
    <property type="entry name" value="Ribosomal protein L17"/>
    <property type="match status" value="1"/>
</dbReference>
<dbReference type="HAMAP" id="MF_01368">
    <property type="entry name" value="Ribosomal_bL17"/>
    <property type="match status" value="1"/>
</dbReference>
<dbReference type="InterPro" id="IPR000456">
    <property type="entry name" value="Ribosomal_bL17"/>
</dbReference>
<dbReference type="InterPro" id="IPR047859">
    <property type="entry name" value="Ribosomal_bL17_CS"/>
</dbReference>
<dbReference type="InterPro" id="IPR036373">
    <property type="entry name" value="Ribosomal_bL17_sf"/>
</dbReference>
<dbReference type="NCBIfam" id="TIGR00059">
    <property type="entry name" value="L17"/>
    <property type="match status" value="1"/>
</dbReference>
<dbReference type="PANTHER" id="PTHR14413:SF16">
    <property type="entry name" value="LARGE RIBOSOMAL SUBUNIT PROTEIN BL17M"/>
    <property type="match status" value="1"/>
</dbReference>
<dbReference type="PANTHER" id="PTHR14413">
    <property type="entry name" value="RIBOSOMAL PROTEIN L17"/>
    <property type="match status" value="1"/>
</dbReference>
<dbReference type="Pfam" id="PF01196">
    <property type="entry name" value="Ribosomal_L17"/>
    <property type="match status" value="1"/>
</dbReference>
<dbReference type="SUPFAM" id="SSF64263">
    <property type="entry name" value="Prokaryotic ribosomal protein L17"/>
    <property type="match status" value="1"/>
</dbReference>
<dbReference type="PROSITE" id="PS01167">
    <property type="entry name" value="RIBOSOMAL_L17"/>
    <property type="match status" value="1"/>
</dbReference>
<keyword id="KW-1185">Reference proteome</keyword>
<keyword id="KW-0687">Ribonucleoprotein</keyword>
<keyword id="KW-0689">Ribosomal protein</keyword>
<sequence length="131" mass="15064">MRHRHGLRKLNRTSSHRLAMLRNMSNSLFQHELIKTTLPKAKELRKVVEPLITLAKKDTVANRRLAFARLRDRDMVTKLFTELGPRYATRPGGYTRILKFGFRQGDNAPMALVELVDRPEITEAPAEEAAE</sequence>
<reference key="1">
    <citation type="journal article" date="2010" name="PLoS ONE">
        <title>The complete genome sequence of Cupriavidus metallidurans strain CH34, a master survivalist in harsh and anthropogenic environments.</title>
        <authorList>
            <person name="Janssen P.J."/>
            <person name="Van Houdt R."/>
            <person name="Moors H."/>
            <person name="Monsieurs P."/>
            <person name="Morin N."/>
            <person name="Michaux A."/>
            <person name="Benotmane M.A."/>
            <person name="Leys N."/>
            <person name="Vallaeys T."/>
            <person name="Lapidus A."/>
            <person name="Monchy S."/>
            <person name="Medigue C."/>
            <person name="Taghavi S."/>
            <person name="McCorkle S."/>
            <person name="Dunn J."/>
            <person name="van der Lelie D."/>
            <person name="Mergeay M."/>
        </authorList>
    </citation>
    <scope>NUCLEOTIDE SEQUENCE [LARGE SCALE GENOMIC DNA]</scope>
    <source>
        <strain>ATCC 43123 / DSM 2839 / NBRC 102507 / CH34</strain>
    </source>
</reference>
<name>RL17_CUPMC</name>
<feature type="chain" id="PRO_0000267921" description="Large ribosomal subunit protein bL17">
    <location>
        <begin position="1"/>
        <end position="131"/>
    </location>
</feature>
<protein>
    <recommendedName>
        <fullName evidence="1">Large ribosomal subunit protein bL17</fullName>
    </recommendedName>
    <alternativeName>
        <fullName evidence="2">50S ribosomal protein L17</fullName>
    </alternativeName>
</protein>
<accession>Q1LI64</accession>
<gene>
    <name evidence="1" type="primary">rplQ</name>
    <name type="ordered locus">Rmet_3290</name>
</gene>
<organism>
    <name type="scientific">Cupriavidus metallidurans (strain ATCC 43123 / DSM 2839 / NBRC 102507 / CH34)</name>
    <name type="common">Ralstonia metallidurans</name>
    <dbReference type="NCBI Taxonomy" id="266264"/>
    <lineage>
        <taxon>Bacteria</taxon>
        <taxon>Pseudomonadati</taxon>
        <taxon>Pseudomonadota</taxon>
        <taxon>Betaproteobacteria</taxon>
        <taxon>Burkholderiales</taxon>
        <taxon>Burkholderiaceae</taxon>
        <taxon>Cupriavidus</taxon>
    </lineage>
</organism>
<evidence type="ECO:0000255" key="1">
    <source>
        <dbReference type="HAMAP-Rule" id="MF_01368"/>
    </source>
</evidence>
<evidence type="ECO:0000305" key="2"/>
<comment type="subunit">
    <text evidence="1">Part of the 50S ribosomal subunit. Contacts protein L32.</text>
</comment>
<comment type="similarity">
    <text evidence="1">Belongs to the bacterial ribosomal protein bL17 family.</text>
</comment>
<proteinExistence type="inferred from homology"/>